<name>CH601_NOCFA</name>
<evidence type="ECO:0000255" key="1">
    <source>
        <dbReference type="HAMAP-Rule" id="MF_00600"/>
    </source>
</evidence>
<gene>
    <name evidence="1" type="primary">groEL1</name>
    <name evidence="1" type="synonym">groL1</name>
    <name type="ordered locus">NFA_8870</name>
</gene>
<protein>
    <recommendedName>
        <fullName evidence="1">Chaperonin GroEL 1</fullName>
        <ecNumber evidence="1">5.6.1.7</ecNumber>
    </recommendedName>
    <alternativeName>
        <fullName evidence="1">60 kDa chaperonin 1</fullName>
    </alternativeName>
    <alternativeName>
        <fullName evidence="1">Chaperonin-60 1</fullName>
        <shortName evidence="1">Cpn60 1</shortName>
    </alternativeName>
</protein>
<organism>
    <name type="scientific">Nocardia farcinica (strain IFM 10152)</name>
    <dbReference type="NCBI Taxonomy" id="247156"/>
    <lineage>
        <taxon>Bacteria</taxon>
        <taxon>Bacillati</taxon>
        <taxon>Actinomycetota</taxon>
        <taxon>Actinomycetes</taxon>
        <taxon>Mycobacteriales</taxon>
        <taxon>Nocardiaceae</taxon>
        <taxon>Nocardia</taxon>
    </lineage>
</organism>
<comment type="function">
    <text evidence="1">Together with its co-chaperonin GroES, plays an essential role in assisting protein folding. The GroEL-GroES system forms a nano-cage that allows encapsulation of the non-native substrate proteins and provides a physical environment optimized to promote and accelerate protein folding.</text>
</comment>
<comment type="catalytic activity">
    <reaction evidence="1">
        <text>ATP + H2O + a folded polypeptide = ADP + phosphate + an unfolded polypeptide.</text>
        <dbReference type="EC" id="5.6.1.7"/>
    </reaction>
</comment>
<comment type="subunit">
    <text evidence="1">Forms a cylinder of 14 subunits composed of two heptameric rings stacked back-to-back. Interacts with the co-chaperonin GroES.</text>
</comment>
<comment type="subcellular location">
    <subcellularLocation>
        <location evidence="1">Cytoplasm</location>
    </subcellularLocation>
</comment>
<comment type="similarity">
    <text evidence="1">Belongs to the chaperonin (HSP60) family.</text>
</comment>
<feature type="chain" id="PRO_0000063463" description="Chaperonin GroEL 1">
    <location>
        <begin position="1"/>
        <end position="536"/>
    </location>
</feature>
<feature type="binding site" evidence="1">
    <location>
        <begin position="29"/>
        <end position="32"/>
    </location>
    <ligand>
        <name>ATP</name>
        <dbReference type="ChEBI" id="CHEBI:30616"/>
    </ligand>
</feature>
<feature type="binding site" evidence="1">
    <location>
        <begin position="86"/>
        <end position="90"/>
    </location>
    <ligand>
        <name>ATP</name>
        <dbReference type="ChEBI" id="CHEBI:30616"/>
    </ligand>
</feature>
<feature type="binding site" evidence="1">
    <location>
        <position position="413"/>
    </location>
    <ligand>
        <name>ATP</name>
        <dbReference type="ChEBI" id="CHEBI:30616"/>
    </ligand>
</feature>
<feature type="binding site" evidence="1">
    <location>
        <begin position="476"/>
        <end position="478"/>
    </location>
    <ligand>
        <name>ATP</name>
        <dbReference type="ChEBI" id="CHEBI:30616"/>
    </ligand>
</feature>
<feature type="binding site" evidence="1">
    <location>
        <position position="492"/>
    </location>
    <ligand>
        <name>ATP</name>
        <dbReference type="ChEBI" id="CHEBI:30616"/>
    </ligand>
</feature>
<proteinExistence type="inferred from homology"/>
<keyword id="KW-0067">ATP-binding</keyword>
<keyword id="KW-0143">Chaperone</keyword>
<keyword id="KW-0963">Cytoplasm</keyword>
<keyword id="KW-0413">Isomerase</keyword>
<keyword id="KW-0547">Nucleotide-binding</keyword>
<keyword id="KW-1185">Reference proteome</keyword>
<dbReference type="EC" id="5.6.1.7" evidence="1"/>
<dbReference type="EMBL" id="AP006618">
    <property type="protein sequence ID" value="BAD55732.1"/>
    <property type="molecule type" value="Genomic_DNA"/>
</dbReference>
<dbReference type="SMR" id="Q5Z1F9"/>
<dbReference type="STRING" id="247156.NFA_8870"/>
<dbReference type="GeneID" id="61131715"/>
<dbReference type="KEGG" id="nfa:NFA_8870"/>
<dbReference type="eggNOG" id="COG0459">
    <property type="taxonomic scope" value="Bacteria"/>
</dbReference>
<dbReference type="HOGENOM" id="CLU_016503_6_1_11"/>
<dbReference type="OrthoDB" id="9766614at2"/>
<dbReference type="Proteomes" id="UP000006820">
    <property type="component" value="Chromosome"/>
</dbReference>
<dbReference type="GO" id="GO:0005737">
    <property type="term" value="C:cytoplasm"/>
    <property type="evidence" value="ECO:0007669"/>
    <property type="project" value="UniProtKB-SubCell"/>
</dbReference>
<dbReference type="GO" id="GO:0005524">
    <property type="term" value="F:ATP binding"/>
    <property type="evidence" value="ECO:0007669"/>
    <property type="project" value="UniProtKB-UniRule"/>
</dbReference>
<dbReference type="GO" id="GO:0140662">
    <property type="term" value="F:ATP-dependent protein folding chaperone"/>
    <property type="evidence" value="ECO:0007669"/>
    <property type="project" value="InterPro"/>
</dbReference>
<dbReference type="GO" id="GO:0016853">
    <property type="term" value="F:isomerase activity"/>
    <property type="evidence" value="ECO:0007669"/>
    <property type="project" value="UniProtKB-KW"/>
</dbReference>
<dbReference type="GO" id="GO:0051082">
    <property type="term" value="F:unfolded protein binding"/>
    <property type="evidence" value="ECO:0007669"/>
    <property type="project" value="UniProtKB-UniRule"/>
</dbReference>
<dbReference type="GO" id="GO:0042026">
    <property type="term" value="P:protein refolding"/>
    <property type="evidence" value="ECO:0007669"/>
    <property type="project" value="UniProtKB-UniRule"/>
</dbReference>
<dbReference type="CDD" id="cd03344">
    <property type="entry name" value="GroEL"/>
    <property type="match status" value="1"/>
</dbReference>
<dbReference type="FunFam" id="3.50.7.10:FF:000001">
    <property type="entry name" value="60 kDa chaperonin"/>
    <property type="match status" value="1"/>
</dbReference>
<dbReference type="Gene3D" id="3.50.7.10">
    <property type="entry name" value="GroEL"/>
    <property type="match status" value="1"/>
</dbReference>
<dbReference type="Gene3D" id="1.10.560.10">
    <property type="entry name" value="GroEL-like equatorial domain"/>
    <property type="match status" value="1"/>
</dbReference>
<dbReference type="Gene3D" id="3.30.260.10">
    <property type="entry name" value="TCP-1-like chaperonin intermediate domain"/>
    <property type="match status" value="1"/>
</dbReference>
<dbReference type="HAMAP" id="MF_00600">
    <property type="entry name" value="CH60"/>
    <property type="match status" value="1"/>
</dbReference>
<dbReference type="InterPro" id="IPR018370">
    <property type="entry name" value="Chaperonin_Cpn60_CS"/>
</dbReference>
<dbReference type="InterPro" id="IPR001844">
    <property type="entry name" value="Cpn60/GroEL"/>
</dbReference>
<dbReference type="InterPro" id="IPR002423">
    <property type="entry name" value="Cpn60/GroEL/TCP-1"/>
</dbReference>
<dbReference type="InterPro" id="IPR027409">
    <property type="entry name" value="GroEL-like_apical_dom_sf"/>
</dbReference>
<dbReference type="InterPro" id="IPR027413">
    <property type="entry name" value="GROEL-like_equatorial_sf"/>
</dbReference>
<dbReference type="InterPro" id="IPR027410">
    <property type="entry name" value="TCP-1-like_intermed_sf"/>
</dbReference>
<dbReference type="NCBIfam" id="TIGR02348">
    <property type="entry name" value="GroEL"/>
    <property type="match status" value="1"/>
</dbReference>
<dbReference type="NCBIfam" id="NF000592">
    <property type="entry name" value="PRK00013.1"/>
    <property type="match status" value="1"/>
</dbReference>
<dbReference type="NCBIfam" id="NF009487">
    <property type="entry name" value="PRK12849.1"/>
    <property type="match status" value="1"/>
</dbReference>
<dbReference type="NCBIfam" id="NF009488">
    <property type="entry name" value="PRK12850.1"/>
    <property type="match status" value="1"/>
</dbReference>
<dbReference type="NCBIfam" id="NF009489">
    <property type="entry name" value="PRK12851.1"/>
    <property type="match status" value="1"/>
</dbReference>
<dbReference type="PANTHER" id="PTHR45633">
    <property type="entry name" value="60 KDA HEAT SHOCK PROTEIN, MITOCHONDRIAL"/>
    <property type="match status" value="1"/>
</dbReference>
<dbReference type="Pfam" id="PF00118">
    <property type="entry name" value="Cpn60_TCP1"/>
    <property type="match status" value="1"/>
</dbReference>
<dbReference type="PRINTS" id="PR00298">
    <property type="entry name" value="CHAPERONIN60"/>
</dbReference>
<dbReference type="SUPFAM" id="SSF52029">
    <property type="entry name" value="GroEL apical domain-like"/>
    <property type="match status" value="1"/>
</dbReference>
<dbReference type="SUPFAM" id="SSF48592">
    <property type="entry name" value="GroEL equatorial domain-like"/>
    <property type="match status" value="1"/>
</dbReference>
<dbReference type="SUPFAM" id="SSF54849">
    <property type="entry name" value="GroEL-intermediate domain like"/>
    <property type="match status" value="1"/>
</dbReference>
<dbReference type="PROSITE" id="PS00296">
    <property type="entry name" value="CHAPERONINS_CPN60"/>
    <property type="match status" value="1"/>
</dbReference>
<accession>Q5Z1F9</accession>
<reference key="1">
    <citation type="journal article" date="2004" name="Proc. Natl. Acad. Sci. U.S.A.">
        <title>The complete genomic sequence of Nocardia farcinica IFM 10152.</title>
        <authorList>
            <person name="Ishikawa J."/>
            <person name="Yamashita A."/>
            <person name="Mikami Y."/>
            <person name="Hoshino Y."/>
            <person name="Kurita H."/>
            <person name="Hotta K."/>
            <person name="Shiba T."/>
            <person name="Hattori M."/>
        </authorList>
    </citation>
    <scope>NUCLEOTIDE SEQUENCE [LARGE SCALE GENOMIC DNA]</scope>
    <source>
        <strain>IFM 10152</strain>
    </source>
</reference>
<sequence>MAKQIEFDEKARRALERGVDKLADAVKVTLGPRGRHVVLAKAFGGPTVTNDGVTIARDIDLEDPFENLGAQLVKSVATKTNDVAGDGTTTATVLAQALVRGGLKNVAAGANPIAVGSGIAKAADAVSEALLAAATPVSGEQAIAQVATVSSRDEEIGEMVGKALTTVGKDGVVTVEESSTLQTELVVTEGVQFDKGYLSPYFITDTDTQEAVLEDAFVLLHREKISSLPDLLPLLEKIAEAGKPVLIVAEDVEGEALSTLVVNSIRKTLKAVAVKAPFFGDRRKAFLDDLAVVTAGTVVNPDLGITLREAGIDVLGKARRVVVTKDETTIIDGAGTAEDIAARAAQLRREIEATDSDWDREKLEERLAKLAGGVAVIKVGAATETALKERKYRVEDAVSAAKAAVDEGIVPGGGTALVQAATKLVELRDSLSGDEAVGVEVVRKALEAPLFWIASNAGLDGAVVVSKVAEGKEGFNAATLSYGDLLTDGVVDPVKVTRSAVVNAASVARMVLTTESAVVDKPAEEAEDHSHHGHAH</sequence>